<proteinExistence type="inferred from homology"/>
<keyword id="KW-0030">Aminoacyl-tRNA synthetase</keyword>
<keyword id="KW-0067">ATP-binding</keyword>
<keyword id="KW-0963">Cytoplasm</keyword>
<keyword id="KW-0436">Ligase</keyword>
<keyword id="KW-0479">Metal-binding</keyword>
<keyword id="KW-0547">Nucleotide-binding</keyword>
<keyword id="KW-0648">Protein biosynthesis</keyword>
<keyword id="KW-0694">RNA-binding</keyword>
<keyword id="KW-0820">tRNA-binding</keyword>
<keyword id="KW-0862">Zinc</keyword>
<protein>
    <recommendedName>
        <fullName evidence="1">Threonine--tRNA ligase</fullName>
        <ecNumber evidence="1">6.1.1.3</ecNumber>
    </recommendedName>
    <alternativeName>
        <fullName evidence="1">Threonyl-tRNA synthetase</fullName>
        <shortName evidence="1">ThrRS</shortName>
    </alternativeName>
</protein>
<gene>
    <name evidence="1" type="primary">thrS</name>
    <name type="ordered locus">FTH_1369</name>
</gene>
<accession>Q0BL41</accession>
<evidence type="ECO:0000255" key="1">
    <source>
        <dbReference type="HAMAP-Rule" id="MF_00184"/>
    </source>
</evidence>
<evidence type="ECO:0000255" key="2">
    <source>
        <dbReference type="PROSITE-ProRule" id="PRU01228"/>
    </source>
</evidence>
<comment type="function">
    <text evidence="1">Catalyzes the attachment of threonine to tRNA(Thr) in a two-step reaction: L-threonine is first activated by ATP to form Thr-AMP and then transferred to the acceptor end of tRNA(Thr). Also edits incorrectly charged L-seryl-tRNA(Thr).</text>
</comment>
<comment type="catalytic activity">
    <reaction evidence="1">
        <text>tRNA(Thr) + L-threonine + ATP = L-threonyl-tRNA(Thr) + AMP + diphosphate + H(+)</text>
        <dbReference type="Rhea" id="RHEA:24624"/>
        <dbReference type="Rhea" id="RHEA-COMP:9670"/>
        <dbReference type="Rhea" id="RHEA-COMP:9704"/>
        <dbReference type="ChEBI" id="CHEBI:15378"/>
        <dbReference type="ChEBI" id="CHEBI:30616"/>
        <dbReference type="ChEBI" id="CHEBI:33019"/>
        <dbReference type="ChEBI" id="CHEBI:57926"/>
        <dbReference type="ChEBI" id="CHEBI:78442"/>
        <dbReference type="ChEBI" id="CHEBI:78534"/>
        <dbReference type="ChEBI" id="CHEBI:456215"/>
        <dbReference type="EC" id="6.1.1.3"/>
    </reaction>
</comment>
<comment type="cofactor">
    <cofactor evidence="1">
        <name>Zn(2+)</name>
        <dbReference type="ChEBI" id="CHEBI:29105"/>
    </cofactor>
    <text evidence="1">Binds 1 zinc ion per subunit.</text>
</comment>
<comment type="subunit">
    <text evidence="1">Homodimer.</text>
</comment>
<comment type="subcellular location">
    <subcellularLocation>
        <location evidence="1">Cytoplasm</location>
    </subcellularLocation>
</comment>
<comment type="similarity">
    <text evidence="1">Belongs to the class-II aminoacyl-tRNA synthetase family.</text>
</comment>
<organism>
    <name type="scientific">Francisella tularensis subsp. holarctica (strain OSU18)</name>
    <dbReference type="NCBI Taxonomy" id="393011"/>
    <lineage>
        <taxon>Bacteria</taxon>
        <taxon>Pseudomonadati</taxon>
        <taxon>Pseudomonadota</taxon>
        <taxon>Gammaproteobacteria</taxon>
        <taxon>Thiotrichales</taxon>
        <taxon>Francisellaceae</taxon>
        <taxon>Francisella</taxon>
    </lineage>
</organism>
<dbReference type="EC" id="6.1.1.3" evidence="1"/>
<dbReference type="EMBL" id="CP000437">
    <property type="protein sequence ID" value="ABI83193.1"/>
    <property type="molecule type" value="Genomic_DNA"/>
</dbReference>
<dbReference type="RefSeq" id="WP_011648736.1">
    <property type="nucleotide sequence ID" value="NC_008369.1"/>
</dbReference>
<dbReference type="SMR" id="Q0BL41"/>
<dbReference type="KEGG" id="fth:FTH_1369"/>
<dbReference type="GO" id="GO:0005737">
    <property type="term" value="C:cytoplasm"/>
    <property type="evidence" value="ECO:0007669"/>
    <property type="project" value="UniProtKB-SubCell"/>
</dbReference>
<dbReference type="GO" id="GO:0005524">
    <property type="term" value="F:ATP binding"/>
    <property type="evidence" value="ECO:0007669"/>
    <property type="project" value="UniProtKB-UniRule"/>
</dbReference>
<dbReference type="GO" id="GO:0046872">
    <property type="term" value="F:metal ion binding"/>
    <property type="evidence" value="ECO:0007669"/>
    <property type="project" value="UniProtKB-KW"/>
</dbReference>
<dbReference type="GO" id="GO:0004829">
    <property type="term" value="F:threonine-tRNA ligase activity"/>
    <property type="evidence" value="ECO:0007669"/>
    <property type="project" value="UniProtKB-UniRule"/>
</dbReference>
<dbReference type="GO" id="GO:0000049">
    <property type="term" value="F:tRNA binding"/>
    <property type="evidence" value="ECO:0007669"/>
    <property type="project" value="UniProtKB-KW"/>
</dbReference>
<dbReference type="GO" id="GO:0006435">
    <property type="term" value="P:threonyl-tRNA aminoacylation"/>
    <property type="evidence" value="ECO:0007669"/>
    <property type="project" value="UniProtKB-UniRule"/>
</dbReference>
<dbReference type="CDD" id="cd01667">
    <property type="entry name" value="TGS_ThrRS"/>
    <property type="match status" value="1"/>
</dbReference>
<dbReference type="CDD" id="cd00860">
    <property type="entry name" value="ThrRS_anticodon"/>
    <property type="match status" value="1"/>
</dbReference>
<dbReference type="CDD" id="cd00771">
    <property type="entry name" value="ThrRS_core"/>
    <property type="match status" value="1"/>
</dbReference>
<dbReference type="FunFam" id="3.10.20.30:FF:000005">
    <property type="entry name" value="Threonine--tRNA ligase"/>
    <property type="match status" value="1"/>
</dbReference>
<dbReference type="FunFam" id="3.30.54.20:FF:000002">
    <property type="entry name" value="Threonine--tRNA ligase"/>
    <property type="match status" value="1"/>
</dbReference>
<dbReference type="FunFam" id="3.30.930.10:FF:000002">
    <property type="entry name" value="Threonine--tRNA ligase"/>
    <property type="match status" value="1"/>
</dbReference>
<dbReference type="FunFam" id="3.40.50.800:FF:000001">
    <property type="entry name" value="Threonine--tRNA ligase"/>
    <property type="match status" value="1"/>
</dbReference>
<dbReference type="FunFam" id="3.30.980.10:FF:000005">
    <property type="entry name" value="Threonyl-tRNA synthetase, mitochondrial"/>
    <property type="match status" value="1"/>
</dbReference>
<dbReference type="Gene3D" id="3.10.20.30">
    <property type="match status" value="1"/>
</dbReference>
<dbReference type="Gene3D" id="3.30.54.20">
    <property type="match status" value="1"/>
</dbReference>
<dbReference type="Gene3D" id="3.40.50.800">
    <property type="entry name" value="Anticodon-binding domain"/>
    <property type="match status" value="1"/>
</dbReference>
<dbReference type="Gene3D" id="3.30.930.10">
    <property type="entry name" value="Bira Bifunctional Protein, Domain 2"/>
    <property type="match status" value="1"/>
</dbReference>
<dbReference type="Gene3D" id="3.30.980.10">
    <property type="entry name" value="Threonyl-trna Synthetase, Chain A, domain 2"/>
    <property type="match status" value="1"/>
</dbReference>
<dbReference type="HAMAP" id="MF_00184">
    <property type="entry name" value="Thr_tRNA_synth"/>
    <property type="match status" value="1"/>
</dbReference>
<dbReference type="InterPro" id="IPR002314">
    <property type="entry name" value="aa-tRNA-synt_IIb"/>
</dbReference>
<dbReference type="InterPro" id="IPR006195">
    <property type="entry name" value="aa-tRNA-synth_II"/>
</dbReference>
<dbReference type="InterPro" id="IPR045864">
    <property type="entry name" value="aa-tRNA-synth_II/BPL/LPL"/>
</dbReference>
<dbReference type="InterPro" id="IPR004154">
    <property type="entry name" value="Anticodon-bd"/>
</dbReference>
<dbReference type="InterPro" id="IPR036621">
    <property type="entry name" value="Anticodon-bd_dom_sf"/>
</dbReference>
<dbReference type="InterPro" id="IPR012675">
    <property type="entry name" value="Beta-grasp_dom_sf"/>
</dbReference>
<dbReference type="InterPro" id="IPR004095">
    <property type="entry name" value="TGS"/>
</dbReference>
<dbReference type="InterPro" id="IPR012676">
    <property type="entry name" value="TGS-like"/>
</dbReference>
<dbReference type="InterPro" id="IPR002320">
    <property type="entry name" value="Thr-tRNA-ligase_IIa"/>
</dbReference>
<dbReference type="InterPro" id="IPR018163">
    <property type="entry name" value="Thr/Ala-tRNA-synth_IIc_edit"/>
</dbReference>
<dbReference type="InterPro" id="IPR047246">
    <property type="entry name" value="ThrRS_anticodon"/>
</dbReference>
<dbReference type="InterPro" id="IPR033728">
    <property type="entry name" value="ThrRS_core"/>
</dbReference>
<dbReference type="InterPro" id="IPR012947">
    <property type="entry name" value="tRNA_SAD"/>
</dbReference>
<dbReference type="NCBIfam" id="TIGR00418">
    <property type="entry name" value="thrS"/>
    <property type="match status" value="1"/>
</dbReference>
<dbReference type="PANTHER" id="PTHR11451:SF44">
    <property type="entry name" value="THREONINE--TRNA LIGASE, CHLOROPLASTIC_MITOCHONDRIAL 2"/>
    <property type="match status" value="1"/>
</dbReference>
<dbReference type="PANTHER" id="PTHR11451">
    <property type="entry name" value="THREONINE-TRNA LIGASE"/>
    <property type="match status" value="1"/>
</dbReference>
<dbReference type="Pfam" id="PF03129">
    <property type="entry name" value="HGTP_anticodon"/>
    <property type="match status" value="1"/>
</dbReference>
<dbReference type="Pfam" id="PF02824">
    <property type="entry name" value="TGS"/>
    <property type="match status" value="1"/>
</dbReference>
<dbReference type="Pfam" id="PF00587">
    <property type="entry name" value="tRNA-synt_2b"/>
    <property type="match status" value="1"/>
</dbReference>
<dbReference type="Pfam" id="PF07973">
    <property type="entry name" value="tRNA_SAD"/>
    <property type="match status" value="1"/>
</dbReference>
<dbReference type="PRINTS" id="PR01047">
    <property type="entry name" value="TRNASYNTHTHR"/>
</dbReference>
<dbReference type="SMART" id="SM00863">
    <property type="entry name" value="tRNA_SAD"/>
    <property type="match status" value="1"/>
</dbReference>
<dbReference type="SUPFAM" id="SSF52954">
    <property type="entry name" value="Class II aaRS ABD-related"/>
    <property type="match status" value="1"/>
</dbReference>
<dbReference type="SUPFAM" id="SSF55681">
    <property type="entry name" value="Class II aaRS and biotin synthetases"/>
    <property type="match status" value="1"/>
</dbReference>
<dbReference type="SUPFAM" id="SSF81271">
    <property type="entry name" value="TGS-like"/>
    <property type="match status" value="1"/>
</dbReference>
<dbReference type="SUPFAM" id="SSF55186">
    <property type="entry name" value="ThrRS/AlaRS common domain"/>
    <property type="match status" value="1"/>
</dbReference>
<dbReference type="PROSITE" id="PS50862">
    <property type="entry name" value="AA_TRNA_LIGASE_II"/>
    <property type="match status" value="1"/>
</dbReference>
<dbReference type="PROSITE" id="PS51880">
    <property type="entry name" value="TGS"/>
    <property type="match status" value="1"/>
</dbReference>
<name>SYT_FRATO</name>
<feature type="chain" id="PRO_1000020394" description="Threonine--tRNA ligase">
    <location>
        <begin position="1"/>
        <end position="634"/>
    </location>
</feature>
<feature type="domain" description="TGS" evidence="2">
    <location>
        <begin position="1"/>
        <end position="61"/>
    </location>
</feature>
<feature type="region of interest" description="Catalytic" evidence="1">
    <location>
        <begin position="241"/>
        <end position="532"/>
    </location>
</feature>
<feature type="binding site" evidence="1">
    <location>
        <position position="332"/>
    </location>
    <ligand>
        <name>Zn(2+)</name>
        <dbReference type="ChEBI" id="CHEBI:29105"/>
    </ligand>
</feature>
<feature type="binding site" evidence="1">
    <location>
        <position position="383"/>
    </location>
    <ligand>
        <name>Zn(2+)</name>
        <dbReference type="ChEBI" id="CHEBI:29105"/>
    </ligand>
</feature>
<feature type="binding site" evidence="1">
    <location>
        <position position="509"/>
    </location>
    <ligand>
        <name>Zn(2+)</name>
        <dbReference type="ChEBI" id="CHEBI:29105"/>
    </ligand>
</feature>
<reference key="1">
    <citation type="journal article" date="2006" name="J. Bacteriol.">
        <title>Chromosome rearrangement and diversification of Francisella tularensis revealed by the type B (OSU18) genome sequence.</title>
        <authorList>
            <person name="Petrosino J.F."/>
            <person name="Xiang Q."/>
            <person name="Karpathy S.E."/>
            <person name="Jiang H."/>
            <person name="Yerrapragada S."/>
            <person name="Liu Y."/>
            <person name="Gioia J."/>
            <person name="Hemphill L."/>
            <person name="Gonzalez A."/>
            <person name="Raghavan T.M."/>
            <person name="Uzman A."/>
            <person name="Fox G.E."/>
            <person name="Highlander S."/>
            <person name="Reichard M."/>
            <person name="Morton R.J."/>
            <person name="Clinkenbeard K.D."/>
            <person name="Weinstock G.M."/>
        </authorList>
    </citation>
    <scope>NUCLEOTIDE SEQUENCE [LARGE SCALE GENOMIC DNA]</scope>
    <source>
        <strain>OSU18</strain>
    </source>
</reference>
<sequence length="634" mass="72412">MINIRFPDGSIREFEAGVNSLDVAKSISPSLAKATMAAYIDDQLKDAKDAINSNCELRLITVKDPEGLEILRHSCAHLLAHAVKELYPNTEVTIGPVVDNGFYYDFSFKESIGEADLPTIEKKMKELAKKSAPVSYRVVPKTEAIEFFKAQGENYKVEIIDSIADEQMKIYTQDNFSDLCRGPHIPNTSVLKAFKLTKLAGAYWRGNSDNEMLTRIYGTCWATKEDLEQYLNMLEEAEKRDHRKIGKVLDLFHFQEDSPGIAFWHDNGVRIWRQVEDYMRASNNKYGCSEIRTPLIADFSLWQKSGHASKYAENMFATKSENRDFAIRPMNCPTCVQVYNTKLHSYRDLPIRMAEFGIVHRNEPSGSLHGLLRVRSFTQDDGHIFCTPEQVEEEVILMVQQCFEVYKDFGFNDFAVKIALRPENRIGDDETWDKSEQILKNALDANNVSYELFPGEGAFYGPKIEFHLKDAIGRSWQCGTIQLDFSMPQRLGATYIDKNGEKQVSVMLHRAIVGSLERFIGMLIEHYAGNLPLWLAPVQVAVMGISNNQDDYCKEVFIMLEKNGIRAKLDLRNEKIGFKIREHTLLRVPYLVILGKNEQEQKIITIRKHSGEDLGQMSVDDFCAFLDKQIQAKE</sequence>